<organism>
    <name type="scientific">Aspergillus niger (strain ATCC MYA-4892 / CBS 513.88 / FGSC A1513)</name>
    <dbReference type="NCBI Taxonomy" id="425011"/>
    <lineage>
        <taxon>Eukaryota</taxon>
        <taxon>Fungi</taxon>
        <taxon>Dikarya</taxon>
        <taxon>Ascomycota</taxon>
        <taxon>Pezizomycotina</taxon>
        <taxon>Eurotiomycetes</taxon>
        <taxon>Eurotiomycetidae</taxon>
        <taxon>Eurotiales</taxon>
        <taxon>Aspergillaceae</taxon>
        <taxon>Aspergillus</taxon>
        <taxon>Aspergillus subgen. Circumdati</taxon>
    </lineage>
</organism>
<feature type="chain" id="PRO_0000281683" description="ATP-dependent RNA helicase eIF4A">
    <location>
        <begin position="1"/>
        <end position="398"/>
    </location>
</feature>
<feature type="domain" description="Helicase ATP-binding" evidence="2">
    <location>
        <begin position="56"/>
        <end position="226"/>
    </location>
</feature>
<feature type="domain" description="Helicase C-terminal" evidence="3">
    <location>
        <begin position="237"/>
        <end position="398"/>
    </location>
</feature>
<feature type="short sequence motif" description="Q motif">
    <location>
        <begin position="25"/>
        <end position="53"/>
    </location>
</feature>
<feature type="short sequence motif" description="DEAD box">
    <location>
        <begin position="174"/>
        <end position="177"/>
    </location>
</feature>
<feature type="binding site" evidence="2">
    <location>
        <begin position="69"/>
        <end position="76"/>
    </location>
    <ligand>
        <name>ATP</name>
        <dbReference type="ChEBI" id="CHEBI:30616"/>
    </ligand>
</feature>
<dbReference type="EC" id="3.6.4.13"/>
<dbReference type="EMBL" id="AM270030">
    <property type="protein sequence ID" value="CAK44496.1"/>
    <property type="molecule type" value="Genomic_DNA"/>
</dbReference>
<dbReference type="RefSeq" id="XP_001400296.1">
    <property type="nucleotide sequence ID" value="XM_001400259.2"/>
</dbReference>
<dbReference type="SMR" id="A2QEN5"/>
<dbReference type="EnsemblFungi" id="CAK44496">
    <property type="protein sequence ID" value="CAK44496"/>
    <property type="gene ID" value="An02g11680"/>
</dbReference>
<dbReference type="GeneID" id="4979705"/>
<dbReference type="KEGG" id="ang:An02g11680"/>
<dbReference type="VEuPathDB" id="FungiDB:An02g11680"/>
<dbReference type="HOGENOM" id="CLU_003041_1_0_1"/>
<dbReference type="Proteomes" id="UP000006706">
    <property type="component" value="Chromosome 4R"/>
</dbReference>
<dbReference type="GO" id="GO:0005737">
    <property type="term" value="C:cytoplasm"/>
    <property type="evidence" value="ECO:0007669"/>
    <property type="project" value="UniProtKB-SubCell"/>
</dbReference>
<dbReference type="GO" id="GO:0005524">
    <property type="term" value="F:ATP binding"/>
    <property type="evidence" value="ECO:0007669"/>
    <property type="project" value="UniProtKB-KW"/>
</dbReference>
<dbReference type="GO" id="GO:0016887">
    <property type="term" value="F:ATP hydrolysis activity"/>
    <property type="evidence" value="ECO:0007669"/>
    <property type="project" value="RHEA"/>
</dbReference>
<dbReference type="GO" id="GO:0003723">
    <property type="term" value="F:RNA binding"/>
    <property type="evidence" value="ECO:0007669"/>
    <property type="project" value="UniProtKB-KW"/>
</dbReference>
<dbReference type="GO" id="GO:0003724">
    <property type="term" value="F:RNA helicase activity"/>
    <property type="evidence" value="ECO:0007669"/>
    <property type="project" value="UniProtKB-EC"/>
</dbReference>
<dbReference type="GO" id="GO:0003743">
    <property type="term" value="F:translation initiation factor activity"/>
    <property type="evidence" value="ECO:0007669"/>
    <property type="project" value="UniProtKB-KW"/>
</dbReference>
<dbReference type="GO" id="GO:0002183">
    <property type="term" value="P:cytoplasmic translational initiation"/>
    <property type="evidence" value="ECO:0007669"/>
    <property type="project" value="EnsemblFungi"/>
</dbReference>
<dbReference type="CDD" id="cd18046">
    <property type="entry name" value="DEADc_EIF4AII_EIF4AI_DDX2"/>
    <property type="match status" value="1"/>
</dbReference>
<dbReference type="CDD" id="cd18787">
    <property type="entry name" value="SF2_C_DEAD"/>
    <property type="match status" value="1"/>
</dbReference>
<dbReference type="FunFam" id="3.40.50.300:FF:000089">
    <property type="entry name" value="Eukaryotic initiation factor 4A-II"/>
    <property type="match status" value="1"/>
</dbReference>
<dbReference type="FunFam" id="3.40.50.300:FF:000031">
    <property type="entry name" value="Eukaryotic initiation factor 4A-III"/>
    <property type="match status" value="1"/>
</dbReference>
<dbReference type="Gene3D" id="3.40.50.300">
    <property type="entry name" value="P-loop containing nucleotide triphosphate hydrolases"/>
    <property type="match status" value="2"/>
</dbReference>
<dbReference type="InterPro" id="IPR011545">
    <property type="entry name" value="DEAD/DEAH_box_helicase_dom"/>
</dbReference>
<dbReference type="InterPro" id="IPR044728">
    <property type="entry name" value="EIF4A_DEADc"/>
</dbReference>
<dbReference type="InterPro" id="IPR014001">
    <property type="entry name" value="Helicase_ATP-bd"/>
</dbReference>
<dbReference type="InterPro" id="IPR001650">
    <property type="entry name" value="Helicase_C-like"/>
</dbReference>
<dbReference type="InterPro" id="IPR027417">
    <property type="entry name" value="P-loop_NTPase"/>
</dbReference>
<dbReference type="InterPro" id="IPR000629">
    <property type="entry name" value="RNA-helicase_DEAD-box_CS"/>
</dbReference>
<dbReference type="InterPro" id="IPR014014">
    <property type="entry name" value="RNA_helicase_DEAD_Q_motif"/>
</dbReference>
<dbReference type="PANTHER" id="PTHR47958">
    <property type="entry name" value="ATP-DEPENDENT RNA HELICASE DBP3"/>
    <property type="match status" value="1"/>
</dbReference>
<dbReference type="Pfam" id="PF00270">
    <property type="entry name" value="DEAD"/>
    <property type="match status" value="1"/>
</dbReference>
<dbReference type="Pfam" id="PF00271">
    <property type="entry name" value="Helicase_C"/>
    <property type="match status" value="1"/>
</dbReference>
<dbReference type="SMART" id="SM00487">
    <property type="entry name" value="DEXDc"/>
    <property type="match status" value="1"/>
</dbReference>
<dbReference type="SMART" id="SM00490">
    <property type="entry name" value="HELICc"/>
    <property type="match status" value="1"/>
</dbReference>
<dbReference type="SUPFAM" id="SSF52540">
    <property type="entry name" value="P-loop containing nucleoside triphosphate hydrolases"/>
    <property type="match status" value="1"/>
</dbReference>
<dbReference type="PROSITE" id="PS00039">
    <property type="entry name" value="DEAD_ATP_HELICASE"/>
    <property type="match status" value="1"/>
</dbReference>
<dbReference type="PROSITE" id="PS51192">
    <property type="entry name" value="HELICASE_ATP_BIND_1"/>
    <property type="match status" value="1"/>
</dbReference>
<dbReference type="PROSITE" id="PS51194">
    <property type="entry name" value="HELICASE_CTER"/>
    <property type="match status" value="1"/>
</dbReference>
<dbReference type="PROSITE" id="PS51195">
    <property type="entry name" value="Q_MOTIF"/>
    <property type="match status" value="1"/>
</dbReference>
<evidence type="ECO:0000250" key="1"/>
<evidence type="ECO:0000255" key="2">
    <source>
        <dbReference type="PROSITE-ProRule" id="PRU00541"/>
    </source>
</evidence>
<evidence type="ECO:0000255" key="3">
    <source>
        <dbReference type="PROSITE-ProRule" id="PRU00542"/>
    </source>
</evidence>
<evidence type="ECO:0000305" key="4"/>
<sequence>MASNDKGLEEIPEGQIETNYDEVTDSFDSMDLKPELLRGVYAYGFERPSAIQQRAIKPIIAGHDVIAQAQSGTGKTATFSISALQKIDQELKACQALIVAPTRELAQQIQKVVVAIGDFMNIECHACIGGTNVRDDMNALRAGPQVVVGTPGRIHDMIERRVLKTDQMKLFILDEADEMLSRGFTEQIYDIFQLLPQSTQVTLLSATMPQDVLEVTTKFMRDPIRILVKKQELTLEGIKQFYIAVEKEEWKLDTLSDLYETVTITQAVIFCNTRRKVDWLTDKLTARDFTVSAMHGDMEQGQRDVIMKEFRSGSSRVLIATDLLARGIDVQQVSLVINYDLPANRENYIHRIGRGGRFGRKGVAINFVTADDVRMMREIEQFYSTQIEEMPMNVADLI</sequence>
<comment type="function">
    <text evidence="1">ATP-dependent RNA helicase which is a subunit of the eIF4F complex involved in cap recognition and is required for mRNA binding to ribosome. In the current model of translation initiation, eIF4A unwinds RNA secondary structures in the 5'-UTR of mRNAs which is necessary to allow efficient binding of the small ribosomal subunit, and subsequent scanning for the initiator codon (By similarity).</text>
</comment>
<comment type="catalytic activity">
    <reaction>
        <text>ATP + H2O = ADP + phosphate + H(+)</text>
        <dbReference type="Rhea" id="RHEA:13065"/>
        <dbReference type="ChEBI" id="CHEBI:15377"/>
        <dbReference type="ChEBI" id="CHEBI:15378"/>
        <dbReference type="ChEBI" id="CHEBI:30616"/>
        <dbReference type="ChEBI" id="CHEBI:43474"/>
        <dbReference type="ChEBI" id="CHEBI:456216"/>
        <dbReference type="EC" id="3.6.4.13"/>
    </reaction>
</comment>
<comment type="subunit">
    <text evidence="1">Component of the eIF4F complex, which composition varies with external and internal environmental conditions. It is composed of at least eIF4A, eIF4E and eIF4G (By similarity).</text>
</comment>
<comment type="subcellular location">
    <subcellularLocation>
        <location evidence="1">Cytoplasm</location>
    </subcellularLocation>
</comment>
<comment type="domain">
    <text>The Q motif is unique to and characteristic of the DEAD box family of RNA helicases and controls ATP binding and hydrolysis.</text>
</comment>
<comment type="similarity">
    <text evidence="4">Belongs to the DEAD box helicase family. eIF4A subfamily.</text>
</comment>
<proteinExistence type="inferred from homology"/>
<name>IF4A_ASPNC</name>
<keyword id="KW-0067">ATP-binding</keyword>
<keyword id="KW-0963">Cytoplasm</keyword>
<keyword id="KW-0347">Helicase</keyword>
<keyword id="KW-0378">Hydrolase</keyword>
<keyword id="KW-0396">Initiation factor</keyword>
<keyword id="KW-0547">Nucleotide-binding</keyword>
<keyword id="KW-0648">Protein biosynthesis</keyword>
<keyword id="KW-1185">Reference proteome</keyword>
<keyword id="KW-0694">RNA-binding</keyword>
<protein>
    <recommendedName>
        <fullName>ATP-dependent RNA helicase eIF4A</fullName>
        <ecNumber>3.6.4.13</ecNumber>
    </recommendedName>
    <alternativeName>
        <fullName>Eukaryotic initiation factor 4A</fullName>
        <shortName>eIF-4A</shortName>
    </alternativeName>
    <alternativeName>
        <fullName>Translation initiation factor 1</fullName>
    </alternativeName>
</protein>
<gene>
    <name type="primary">tif1</name>
    <name type="synonym">tif41</name>
    <name type="ORF">An02g11680</name>
</gene>
<reference key="1">
    <citation type="journal article" date="2007" name="Nat. Biotechnol.">
        <title>Genome sequencing and analysis of the versatile cell factory Aspergillus niger CBS 513.88.</title>
        <authorList>
            <person name="Pel H.J."/>
            <person name="de Winde J.H."/>
            <person name="Archer D.B."/>
            <person name="Dyer P.S."/>
            <person name="Hofmann G."/>
            <person name="Schaap P.J."/>
            <person name="Turner G."/>
            <person name="de Vries R.P."/>
            <person name="Albang R."/>
            <person name="Albermann K."/>
            <person name="Andersen M.R."/>
            <person name="Bendtsen J.D."/>
            <person name="Benen J.A.E."/>
            <person name="van den Berg M."/>
            <person name="Breestraat S."/>
            <person name="Caddick M.X."/>
            <person name="Contreras R."/>
            <person name="Cornell M."/>
            <person name="Coutinho P.M."/>
            <person name="Danchin E.G.J."/>
            <person name="Debets A.J.M."/>
            <person name="Dekker P."/>
            <person name="van Dijck P.W.M."/>
            <person name="van Dijk A."/>
            <person name="Dijkhuizen L."/>
            <person name="Driessen A.J.M."/>
            <person name="d'Enfert C."/>
            <person name="Geysens S."/>
            <person name="Goosen C."/>
            <person name="Groot G.S.P."/>
            <person name="de Groot P.W.J."/>
            <person name="Guillemette T."/>
            <person name="Henrissat B."/>
            <person name="Herweijer M."/>
            <person name="van den Hombergh J.P.T.W."/>
            <person name="van den Hondel C.A.M.J.J."/>
            <person name="van der Heijden R.T.J.M."/>
            <person name="van der Kaaij R.M."/>
            <person name="Klis F.M."/>
            <person name="Kools H.J."/>
            <person name="Kubicek C.P."/>
            <person name="van Kuyk P.A."/>
            <person name="Lauber J."/>
            <person name="Lu X."/>
            <person name="van der Maarel M.J.E.C."/>
            <person name="Meulenberg R."/>
            <person name="Menke H."/>
            <person name="Mortimer M.A."/>
            <person name="Nielsen J."/>
            <person name="Oliver S.G."/>
            <person name="Olsthoorn M."/>
            <person name="Pal K."/>
            <person name="van Peij N.N.M.E."/>
            <person name="Ram A.F.J."/>
            <person name="Rinas U."/>
            <person name="Roubos J.A."/>
            <person name="Sagt C.M.J."/>
            <person name="Schmoll M."/>
            <person name="Sun J."/>
            <person name="Ussery D."/>
            <person name="Varga J."/>
            <person name="Vervecken W."/>
            <person name="van de Vondervoort P.J.J."/>
            <person name="Wedler H."/>
            <person name="Woesten H.A.B."/>
            <person name="Zeng A.-P."/>
            <person name="van Ooyen A.J.J."/>
            <person name="Visser J."/>
            <person name="Stam H."/>
        </authorList>
    </citation>
    <scope>NUCLEOTIDE SEQUENCE [LARGE SCALE GENOMIC DNA]</scope>
    <source>
        <strain>ATCC MYA-4892 / CBS 513.88 / FGSC A1513</strain>
    </source>
</reference>
<accession>A2QEN5</accession>